<proteinExistence type="inferred from homology"/>
<evidence type="ECO:0000255" key="1">
    <source>
        <dbReference type="HAMAP-Rule" id="MF_00154"/>
    </source>
</evidence>
<name>COXX_OPITP</name>
<gene>
    <name evidence="1" type="primary">ctaB</name>
    <name type="ordered locus">Oter_2075</name>
</gene>
<protein>
    <recommendedName>
        <fullName evidence="1">Protoheme IX farnesyltransferase</fullName>
        <ecNumber evidence="1">2.5.1.141</ecNumber>
    </recommendedName>
    <alternativeName>
        <fullName evidence="1">Heme B farnesyltransferase</fullName>
    </alternativeName>
    <alternativeName>
        <fullName evidence="1">Heme O synthase</fullName>
    </alternativeName>
</protein>
<sequence>MSTTPASNAKFSDYLELTKPRLSMLSVMTALVGYLAARPPWDPIQLALLVLGTSAAAGGVAALNQWLEHDTDAHMKRTADRPIPAGKVATGSAFVLGVLMCIGSLFLLYALVHPLAALFTLLTIFSYLGWYTPAKRWSRWSTEIGAVAGAFPPLIGWSAGEGRVTALGWVLFGVLFFWQVPHFMAVAWTYRKDYSAVHFPMLPVRDESGERVALWSLINTAALLVTSLLPLLWGLTTWFYGVAAAVTGLWFLWQAIKFMQPATRDRAARKLFFASIGYLPLVLGALVIDRLFLVS</sequence>
<organism>
    <name type="scientific">Opitutus terrae (strain DSM 11246 / JCM 15787 / PB90-1)</name>
    <dbReference type="NCBI Taxonomy" id="452637"/>
    <lineage>
        <taxon>Bacteria</taxon>
        <taxon>Pseudomonadati</taxon>
        <taxon>Verrucomicrobiota</taxon>
        <taxon>Opitutia</taxon>
        <taxon>Opitutales</taxon>
        <taxon>Opitutaceae</taxon>
        <taxon>Opitutus</taxon>
    </lineage>
</organism>
<reference key="1">
    <citation type="journal article" date="2011" name="J. Bacteriol.">
        <title>Genome sequence of the verrucomicrobium Opitutus terrae PB90-1, an abundant inhabitant of rice paddy soil ecosystems.</title>
        <authorList>
            <person name="van Passel M.W."/>
            <person name="Kant R."/>
            <person name="Palva A."/>
            <person name="Copeland A."/>
            <person name="Lucas S."/>
            <person name="Lapidus A."/>
            <person name="Glavina del Rio T."/>
            <person name="Pitluck S."/>
            <person name="Goltsman E."/>
            <person name="Clum A."/>
            <person name="Sun H."/>
            <person name="Schmutz J."/>
            <person name="Larimer F.W."/>
            <person name="Land M.L."/>
            <person name="Hauser L."/>
            <person name="Kyrpides N."/>
            <person name="Mikhailova N."/>
            <person name="Richardson P.P."/>
            <person name="Janssen P.H."/>
            <person name="de Vos W.M."/>
            <person name="Smidt H."/>
        </authorList>
    </citation>
    <scope>NUCLEOTIDE SEQUENCE [LARGE SCALE GENOMIC DNA]</scope>
    <source>
        <strain>DSM 11246 / JCM 15787 / PB90-1</strain>
    </source>
</reference>
<dbReference type="EC" id="2.5.1.141" evidence="1"/>
<dbReference type="EMBL" id="CP001032">
    <property type="protein sequence ID" value="ACB75358.1"/>
    <property type="molecule type" value="Genomic_DNA"/>
</dbReference>
<dbReference type="RefSeq" id="WP_012374895.1">
    <property type="nucleotide sequence ID" value="NC_010571.1"/>
</dbReference>
<dbReference type="SMR" id="B1ZMT0"/>
<dbReference type="STRING" id="452637.Oter_2075"/>
<dbReference type="KEGG" id="ote:Oter_2075"/>
<dbReference type="eggNOG" id="COG0109">
    <property type="taxonomic scope" value="Bacteria"/>
</dbReference>
<dbReference type="HOGENOM" id="CLU_029631_0_0_0"/>
<dbReference type="OrthoDB" id="9814417at2"/>
<dbReference type="UniPathway" id="UPA00834">
    <property type="reaction ID" value="UER00712"/>
</dbReference>
<dbReference type="Proteomes" id="UP000007013">
    <property type="component" value="Chromosome"/>
</dbReference>
<dbReference type="GO" id="GO:0005886">
    <property type="term" value="C:plasma membrane"/>
    <property type="evidence" value="ECO:0007669"/>
    <property type="project" value="UniProtKB-SubCell"/>
</dbReference>
<dbReference type="GO" id="GO:0008495">
    <property type="term" value="F:protoheme IX farnesyltransferase activity"/>
    <property type="evidence" value="ECO:0007669"/>
    <property type="project" value="UniProtKB-UniRule"/>
</dbReference>
<dbReference type="GO" id="GO:0048034">
    <property type="term" value="P:heme O biosynthetic process"/>
    <property type="evidence" value="ECO:0007669"/>
    <property type="project" value="UniProtKB-UniRule"/>
</dbReference>
<dbReference type="CDD" id="cd13957">
    <property type="entry name" value="PT_UbiA_Cox10"/>
    <property type="match status" value="1"/>
</dbReference>
<dbReference type="Gene3D" id="1.10.357.140">
    <property type="entry name" value="UbiA prenyltransferase"/>
    <property type="match status" value="1"/>
</dbReference>
<dbReference type="HAMAP" id="MF_00154">
    <property type="entry name" value="CyoE_CtaB"/>
    <property type="match status" value="1"/>
</dbReference>
<dbReference type="InterPro" id="IPR006369">
    <property type="entry name" value="Protohaem_IX_farnesylTrfase"/>
</dbReference>
<dbReference type="InterPro" id="IPR000537">
    <property type="entry name" value="UbiA_prenyltransferase"/>
</dbReference>
<dbReference type="InterPro" id="IPR030470">
    <property type="entry name" value="UbiA_prenylTrfase_CS"/>
</dbReference>
<dbReference type="InterPro" id="IPR044878">
    <property type="entry name" value="UbiA_sf"/>
</dbReference>
<dbReference type="NCBIfam" id="TIGR01473">
    <property type="entry name" value="cyoE_ctaB"/>
    <property type="match status" value="1"/>
</dbReference>
<dbReference type="PANTHER" id="PTHR43448">
    <property type="entry name" value="PROTOHEME IX FARNESYLTRANSFERASE, MITOCHONDRIAL"/>
    <property type="match status" value="1"/>
</dbReference>
<dbReference type="PANTHER" id="PTHR43448:SF2">
    <property type="entry name" value="PROTOHEME IX FARNESYLTRANSFERASE, MITOCHONDRIAL"/>
    <property type="match status" value="1"/>
</dbReference>
<dbReference type="Pfam" id="PF01040">
    <property type="entry name" value="UbiA"/>
    <property type="match status" value="1"/>
</dbReference>
<dbReference type="PROSITE" id="PS00943">
    <property type="entry name" value="UBIA"/>
    <property type="match status" value="1"/>
</dbReference>
<keyword id="KW-0997">Cell inner membrane</keyword>
<keyword id="KW-1003">Cell membrane</keyword>
<keyword id="KW-0350">Heme biosynthesis</keyword>
<keyword id="KW-0472">Membrane</keyword>
<keyword id="KW-1185">Reference proteome</keyword>
<keyword id="KW-0808">Transferase</keyword>
<keyword id="KW-0812">Transmembrane</keyword>
<keyword id="KW-1133">Transmembrane helix</keyword>
<feature type="chain" id="PRO_0000346063" description="Protoheme IX farnesyltransferase">
    <location>
        <begin position="1"/>
        <end position="295"/>
    </location>
</feature>
<feature type="transmembrane region" description="Helical" evidence="1">
    <location>
        <begin position="43"/>
        <end position="63"/>
    </location>
</feature>
<feature type="transmembrane region" description="Helical" evidence="1">
    <location>
        <begin position="92"/>
        <end position="112"/>
    </location>
</feature>
<feature type="transmembrane region" description="Helical" evidence="1">
    <location>
        <begin position="114"/>
        <end position="134"/>
    </location>
</feature>
<feature type="transmembrane region" description="Helical" evidence="1">
    <location>
        <begin position="140"/>
        <end position="160"/>
    </location>
</feature>
<feature type="transmembrane region" description="Helical" evidence="1">
    <location>
        <begin position="166"/>
        <end position="186"/>
    </location>
</feature>
<feature type="transmembrane region" description="Helical" evidence="1">
    <location>
        <begin position="231"/>
        <end position="251"/>
    </location>
</feature>
<feature type="transmembrane region" description="Helical" evidence="1">
    <location>
        <begin position="272"/>
        <end position="292"/>
    </location>
</feature>
<comment type="function">
    <text evidence="1">Converts heme B (protoheme IX) to heme O by substitution of the vinyl group on carbon 2 of heme B porphyrin ring with a hydroxyethyl farnesyl side group.</text>
</comment>
<comment type="catalytic activity">
    <reaction evidence="1">
        <text>heme b + (2E,6E)-farnesyl diphosphate + H2O = Fe(II)-heme o + diphosphate</text>
        <dbReference type="Rhea" id="RHEA:28070"/>
        <dbReference type="ChEBI" id="CHEBI:15377"/>
        <dbReference type="ChEBI" id="CHEBI:33019"/>
        <dbReference type="ChEBI" id="CHEBI:60344"/>
        <dbReference type="ChEBI" id="CHEBI:60530"/>
        <dbReference type="ChEBI" id="CHEBI:175763"/>
        <dbReference type="EC" id="2.5.1.141"/>
    </reaction>
</comment>
<comment type="pathway">
    <text evidence="1">Porphyrin-containing compound metabolism; heme O biosynthesis; heme O from protoheme: step 1/1.</text>
</comment>
<comment type="subcellular location">
    <subcellularLocation>
        <location evidence="1">Cell inner membrane</location>
        <topology evidence="1">Multi-pass membrane protein</topology>
    </subcellularLocation>
</comment>
<comment type="miscellaneous">
    <text evidence="1">Carbon 2 of the heme B porphyrin ring is defined according to the Fischer nomenclature.</text>
</comment>
<comment type="similarity">
    <text evidence="1">Belongs to the UbiA prenyltransferase family. Protoheme IX farnesyltransferase subfamily.</text>
</comment>
<accession>B1ZMT0</accession>